<dbReference type="EC" id="3.1.-.-" evidence="2"/>
<dbReference type="EMBL" id="L77117">
    <property type="protein sequence ID" value="AAB98105.1"/>
    <property type="molecule type" value="Genomic_DNA"/>
</dbReference>
<dbReference type="PIR" id="E64315">
    <property type="entry name" value="E64315"/>
</dbReference>
<dbReference type="RefSeq" id="WP_010869618.1">
    <property type="nucleotide sequence ID" value="NC_000909.1"/>
</dbReference>
<dbReference type="SMR" id="Q57589"/>
<dbReference type="FunCoup" id="Q57589">
    <property type="interactions" value="3"/>
</dbReference>
<dbReference type="STRING" id="243232.MJ_0125"/>
<dbReference type="PaxDb" id="243232-MJ_0125"/>
<dbReference type="EnsemblBacteria" id="AAB98105">
    <property type="protein sequence ID" value="AAB98105"/>
    <property type="gene ID" value="MJ_0125"/>
</dbReference>
<dbReference type="GeneID" id="1450967"/>
<dbReference type="KEGG" id="mja:MJ_0125"/>
<dbReference type="eggNOG" id="arCOG05024">
    <property type="taxonomic scope" value="Archaea"/>
</dbReference>
<dbReference type="HOGENOM" id="CLU_142825_3_3_2"/>
<dbReference type="InParanoid" id="Q57589"/>
<dbReference type="OrthoDB" id="318716at2157"/>
<dbReference type="PhylomeDB" id="Q57589"/>
<dbReference type="Proteomes" id="UP000000805">
    <property type="component" value="Chromosome"/>
</dbReference>
<dbReference type="GO" id="GO:0110001">
    <property type="term" value="C:toxin-antitoxin complex"/>
    <property type="evidence" value="ECO:0007669"/>
    <property type="project" value="InterPro"/>
</dbReference>
<dbReference type="GO" id="GO:0000166">
    <property type="term" value="F:nucleotide binding"/>
    <property type="evidence" value="ECO:0007669"/>
    <property type="project" value="UniProtKB-KW"/>
</dbReference>
<dbReference type="GO" id="GO:0004540">
    <property type="term" value="F:RNA nuclease activity"/>
    <property type="evidence" value="ECO:0007669"/>
    <property type="project" value="InterPro"/>
</dbReference>
<dbReference type="InterPro" id="IPR008201">
    <property type="entry name" value="HepT-like"/>
</dbReference>
<dbReference type="InterPro" id="IPR051813">
    <property type="entry name" value="HepT_RNase_toxin"/>
</dbReference>
<dbReference type="PANTHER" id="PTHR34139:SF1">
    <property type="entry name" value="RNASE MJ1380-RELATED"/>
    <property type="match status" value="1"/>
</dbReference>
<dbReference type="PANTHER" id="PTHR34139">
    <property type="entry name" value="UPF0331 PROTEIN MJ0127"/>
    <property type="match status" value="1"/>
</dbReference>
<dbReference type="Pfam" id="PF01934">
    <property type="entry name" value="HepT-like"/>
    <property type="match status" value="1"/>
</dbReference>
<reference key="1">
    <citation type="journal article" date="1996" name="Science">
        <title>Complete genome sequence of the methanogenic archaeon, Methanococcus jannaschii.</title>
        <authorList>
            <person name="Bult C.J."/>
            <person name="White O."/>
            <person name="Olsen G.J."/>
            <person name="Zhou L."/>
            <person name="Fleischmann R.D."/>
            <person name="Sutton G.G."/>
            <person name="Blake J.A."/>
            <person name="FitzGerald L.M."/>
            <person name="Clayton R.A."/>
            <person name="Gocayne J.D."/>
            <person name="Kerlavage A.R."/>
            <person name="Dougherty B.A."/>
            <person name="Tomb J.-F."/>
            <person name="Adams M.D."/>
            <person name="Reich C.I."/>
            <person name="Overbeek R."/>
            <person name="Kirkness E.F."/>
            <person name="Weinstock K.G."/>
            <person name="Merrick J.M."/>
            <person name="Glodek A."/>
            <person name="Scott J.L."/>
            <person name="Geoghagen N.S.M."/>
            <person name="Weidman J.F."/>
            <person name="Fuhrmann J.L."/>
            <person name="Nguyen D."/>
            <person name="Utterback T.R."/>
            <person name="Kelley J.M."/>
            <person name="Peterson J.D."/>
            <person name="Sadow P.W."/>
            <person name="Hanna M.C."/>
            <person name="Cotton M.D."/>
            <person name="Roberts K.M."/>
            <person name="Hurst M.A."/>
            <person name="Kaine B.P."/>
            <person name="Borodovsky M."/>
            <person name="Klenk H.-P."/>
            <person name="Fraser C.M."/>
            <person name="Smith H.O."/>
            <person name="Woese C.R."/>
            <person name="Venter J.C."/>
        </authorList>
    </citation>
    <scope>NUCLEOTIDE SEQUENCE [LARGE SCALE GENOMIC DNA]</scope>
    <source>
        <strain>ATCC 43067 / DSM 2661 / JAL-1 / JCM 10045 / NBRC 100440</strain>
    </source>
</reference>
<name>Y125_METJA</name>
<keyword id="KW-0378">Hydrolase</keyword>
<keyword id="KW-0540">Nuclease</keyword>
<keyword id="KW-0547">Nucleotide-binding</keyword>
<keyword id="KW-0597">Phosphoprotein</keyword>
<keyword id="KW-1185">Reference proteome</keyword>
<keyword id="KW-1277">Toxin-antitoxin system</keyword>
<accession>Q57589</accession>
<organism>
    <name type="scientific">Methanocaldococcus jannaschii (strain ATCC 43067 / DSM 2661 / JAL-1 / JCM 10045 / NBRC 100440)</name>
    <name type="common">Methanococcus jannaschii</name>
    <dbReference type="NCBI Taxonomy" id="243232"/>
    <lineage>
        <taxon>Archaea</taxon>
        <taxon>Methanobacteriati</taxon>
        <taxon>Methanobacteriota</taxon>
        <taxon>Methanomada group</taxon>
        <taxon>Methanococci</taxon>
        <taxon>Methanococcales</taxon>
        <taxon>Methanocaldococcaceae</taxon>
        <taxon>Methanocaldococcus</taxon>
    </lineage>
</organism>
<gene>
    <name type="ordered locus">MJ0125</name>
</gene>
<proteinExistence type="inferred from homology"/>
<feature type="chain" id="PRO_0000158259" description="Putative RNase MJ0125">
    <location>
        <begin position="1"/>
        <end position="116"/>
    </location>
</feature>
<feature type="short sequence motif" description="RX(4)HXY motif" evidence="1">
    <location>
        <begin position="76"/>
        <end position="83"/>
    </location>
</feature>
<feature type="active site" evidence="1">
    <location>
        <position position="76"/>
    </location>
</feature>
<feature type="active site" evidence="1">
    <location>
        <position position="81"/>
    </location>
</feature>
<feature type="modified residue" description="O-di-AMP-tyrosine" evidence="1">
    <location>
        <position position="83"/>
    </location>
</feature>
<comment type="function">
    <text evidence="2">Probable toxic component of a putative type VII toxin-antitoxin (TA) system, probably an RNase. Probably neutralized by cognate antitoxin MJ0126. Neutralization may be due to AMPylation by MJ0126.</text>
</comment>
<comment type="subunit">
    <text evidence="2">Homodimer, probably forms a complex with cognate antitoxin MJ0126.</text>
</comment>
<comment type="PTM">
    <text evidence="1">Modified by cognate antitoxin MJ0126; probably at least 2 successive AMPylation events occur on Tyr-83.</text>
</comment>
<comment type="similarity">
    <text evidence="3">Belongs to the HepT RNase toxin family.</text>
</comment>
<evidence type="ECO:0000250" key="1">
    <source>
        <dbReference type="UniProtKB" id="A0A0B0QJR1"/>
    </source>
</evidence>
<evidence type="ECO:0000250" key="2">
    <source>
        <dbReference type="UniProtKB" id="Q8ECH6"/>
    </source>
</evidence>
<evidence type="ECO:0000305" key="3"/>
<protein>
    <recommendedName>
        <fullName>Putative RNase MJ0125</fullName>
        <ecNumber evidence="2">3.1.-.-</ecNumber>
    </recommendedName>
    <alternativeName>
        <fullName>Putative toxin MJ0125</fullName>
    </alternativeName>
</protein>
<sequence length="116" mass="13970">MPKRDIKAFLYDILSYMDDIINFTKDMDYEEFINNKAIKYAVIRCLEVIGEAVKKIPKDIREKYPHIPFKELAGMRDKLIHQYFGVDYLTVWETAKYEIPEIKKEFEKIIKDLEEK</sequence>